<dbReference type="EC" id="1.8.4.8" evidence="1"/>
<dbReference type="EMBL" id="CU928164">
    <property type="protein sequence ID" value="CAR19063.1"/>
    <property type="molecule type" value="Genomic_DNA"/>
</dbReference>
<dbReference type="RefSeq" id="WP_000039841.1">
    <property type="nucleotide sequence ID" value="NC_011750.1"/>
</dbReference>
<dbReference type="RefSeq" id="YP_002408875.1">
    <property type="nucleotide sequence ID" value="NC_011750.1"/>
</dbReference>
<dbReference type="SMR" id="B7NT99"/>
<dbReference type="STRING" id="585057.ECIAI39_2944"/>
<dbReference type="KEGG" id="ect:ECIAI39_2944"/>
<dbReference type="PATRIC" id="fig|585057.6.peg.3053"/>
<dbReference type="HOGENOM" id="CLU_044089_3_0_6"/>
<dbReference type="UniPathway" id="UPA00140">
    <property type="reaction ID" value="UER00206"/>
</dbReference>
<dbReference type="Proteomes" id="UP000000749">
    <property type="component" value="Chromosome"/>
</dbReference>
<dbReference type="GO" id="GO:0005737">
    <property type="term" value="C:cytoplasm"/>
    <property type="evidence" value="ECO:0007669"/>
    <property type="project" value="UniProtKB-SubCell"/>
</dbReference>
<dbReference type="GO" id="GO:0004604">
    <property type="term" value="F:phosphoadenylyl-sulfate reductase (thioredoxin) activity"/>
    <property type="evidence" value="ECO:0007669"/>
    <property type="project" value="UniProtKB-UniRule"/>
</dbReference>
<dbReference type="GO" id="GO:0070814">
    <property type="term" value="P:hydrogen sulfide biosynthetic process"/>
    <property type="evidence" value="ECO:0007669"/>
    <property type="project" value="UniProtKB-UniRule"/>
</dbReference>
<dbReference type="GO" id="GO:0019379">
    <property type="term" value="P:sulfate assimilation, phosphoadenylyl sulfate reduction by phosphoadenylyl-sulfate reductase (thioredoxin)"/>
    <property type="evidence" value="ECO:0007669"/>
    <property type="project" value="UniProtKB-UniRule"/>
</dbReference>
<dbReference type="CDD" id="cd23945">
    <property type="entry name" value="PAPS_reductase"/>
    <property type="match status" value="1"/>
</dbReference>
<dbReference type="FunFam" id="3.40.50.620:FF:000043">
    <property type="entry name" value="Phosphoadenosine phosphosulfate reductase"/>
    <property type="match status" value="1"/>
</dbReference>
<dbReference type="Gene3D" id="3.40.50.620">
    <property type="entry name" value="HUPs"/>
    <property type="match status" value="1"/>
</dbReference>
<dbReference type="HAMAP" id="MF_00063">
    <property type="entry name" value="CysH"/>
    <property type="match status" value="1"/>
</dbReference>
<dbReference type="InterPro" id="IPR004511">
    <property type="entry name" value="PAPS/APS_Rdtase"/>
</dbReference>
<dbReference type="InterPro" id="IPR002500">
    <property type="entry name" value="PAPS_reduct_dom"/>
</dbReference>
<dbReference type="InterPro" id="IPR011800">
    <property type="entry name" value="PAPS_reductase_CysH"/>
</dbReference>
<dbReference type="InterPro" id="IPR014729">
    <property type="entry name" value="Rossmann-like_a/b/a_fold"/>
</dbReference>
<dbReference type="NCBIfam" id="TIGR00434">
    <property type="entry name" value="cysH"/>
    <property type="match status" value="1"/>
</dbReference>
<dbReference type="NCBIfam" id="TIGR02057">
    <property type="entry name" value="PAPS_reductase"/>
    <property type="match status" value="1"/>
</dbReference>
<dbReference type="NCBIfam" id="NF002537">
    <property type="entry name" value="PRK02090.1"/>
    <property type="match status" value="1"/>
</dbReference>
<dbReference type="PANTHER" id="PTHR46509">
    <property type="entry name" value="PHOSPHOADENOSINE PHOSPHOSULFATE REDUCTASE"/>
    <property type="match status" value="1"/>
</dbReference>
<dbReference type="PANTHER" id="PTHR46509:SF1">
    <property type="entry name" value="PHOSPHOADENOSINE PHOSPHOSULFATE REDUCTASE"/>
    <property type="match status" value="1"/>
</dbReference>
<dbReference type="Pfam" id="PF01507">
    <property type="entry name" value="PAPS_reduct"/>
    <property type="match status" value="1"/>
</dbReference>
<dbReference type="PIRSF" id="PIRSF000857">
    <property type="entry name" value="PAPS_reductase"/>
    <property type="match status" value="1"/>
</dbReference>
<dbReference type="SUPFAM" id="SSF52402">
    <property type="entry name" value="Adenine nucleotide alpha hydrolases-like"/>
    <property type="match status" value="1"/>
</dbReference>
<sequence length="244" mass="27957">MSKLDLNALNELPKVDRILALAETNAELEKLDAEGRVAWALDNLPGEYVLSSSFGIQAAVSLHLVNQIHPDIPVILTDTGYLFPETYRFIDELTDKLKLNLKVYRATESAAWQEARYGKLWEQGVEGIEKYNDINKVEPMNRALKELNAQTWFAGLRREQSGSRANLPVLAIQRGVFKVLPIIDWDNRTIYQYLQKHGLKYHPLWDEGYLSVGDTHTTRKWEPGMAEEETRFFGLKRECGLHEG</sequence>
<organism>
    <name type="scientific">Escherichia coli O7:K1 (strain IAI39 / ExPEC)</name>
    <dbReference type="NCBI Taxonomy" id="585057"/>
    <lineage>
        <taxon>Bacteria</taxon>
        <taxon>Pseudomonadati</taxon>
        <taxon>Pseudomonadota</taxon>
        <taxon>Gammaproteobacteria</taxon>
        <taxon>Enterobacterales</taxon>
        <taxon>Enterobacteriaceae</taxon>
        <taxon>Escherichia</taxon>
    </lineage>
</organism>
<comment type="function">
    <text evidence="1">Catalyzes the formation of sulfite from phosphoadenosine 5'-phosphosulfate (PAPS) using thioredoxin as an electron donor.</text>
</comment>
<comment type="catalytic activity">
    <reaction evidence="1">
        <text>[thioredoxin]-disulfide + sulfite + adenosine 3',5'-bisphosphate + 2 H(+) = [thioredoxin]-dithiol + 3'-phosphoadenylyl sulfate</text>
        <dbReference type="Rhea" id="RHEA:11724"/>
        <dbReference type="Rhea" id="RHEA-COMP:10698"/>
        <dbReference type="Rhea" id="RHEA-COMP:10700"/>
        <dbReference type="ChEBI" id="CHEBI:15378"/>
        <dbReference type="ChEBI" id="CHEBI:17359"/>
        <dbReference type="ChEBI" id="CHEBI:29950"/>
        <dbReference type="ChEBI" id="CHEBI:50058"/>
        <dbReference type="ChEBI" id="CHEBI:58339"/>
        <dbReference type="ChEBI" id="CHEBI:58343"/>
        <dbReference type="EC" id="1.8.4.8"/>
    </reaction>
</comment>
<comment type="pathway">
    <text evidence="1">Sulfur metabolism; hydrogen sulfide biosynthesis; sulfite from sulfate: step 3/3.</text>
</comment>
<comment type="subcellular location">
    <subcellularLocation>
        <location evidence="1">Cytoplasm</location>
    </subcellularLocation>
</comment>
<comment type="similarity">
    <text evidence="1">Belongs to the PAPS reductase family. CysH subfamily.</text>
</comment>
<evidence type="ECO:0000255" key="1">
    <source>
        <dbReference type="HAMAP-Rule" id="MF_00063"/>
    </source>
</evidence>
<name>CYSH_ECO7I</name>
<keyword id="KW-0963">Cytoplasm</keyword>
<keyword id="KW-0560">Oxidoreductase</keyword>
<gene>
    <name evidence="1" type="primary">cysH</name>
    <name type="ordered locus">ECIAI39_2944</name>
</gene>
<feature type="chain" id="PRO_1000116949" description="Phosphoadenosine 5'-phosphosulfate reductase">
    <location>
        <begin position="1"/>
        <end position="244"/>
    </location>
</feature>
<feature type="active site" description="Nucleophile; cysteine thiosulfonate intermediate" evidence="1">
    <location>
        <position position="239"/>
    </location>
</feature>
<protein>
    <recommendedName>
        <fullName evidence="1">Phosphoadenosine 5'-phosphosulfate reductase</fullName>
        <shortName evidence="1">PAPS reductase</shortName>
        <ecNumber evidence="1">1.8.4.8</ecNumber>
    </recommendedName>
    <alternativeName>
        <fullName evidence="1">3'-phosphoadenylylsulfate reductase</fullName>
    </alternativeName>
    <alternativeName>
        <fullName evidence="1">PAPS reductase, thioredoxin dependent</fullName>
    </alternativeName>
    <alternativeName>
        <fullName evidence="1">PAPS sulfotransferase</fullName>
    </alternativeName>
    <alternativeName>
        <fullName evidence="1">PAdoPS reductase</fullName>
    </alternativeName>
</protein>
<proteinExistence type="inferred from homology"/>
<reference key="1">
    <citation type="journal article" date="2009" name="PLoS Genet.">
        <title>Organised genome dynamics in the Escherichia coli species results in highly diverse adaptive paths.</title>
        <authorList>
            <person name="Touchon M."/>
            <person name="Hoede C."/>
            <person name="Tenaillon O."/>
            <person name="Barbe V."/>
            <person name="Baeriswyl S."/>
            <person name="Bidet P."/>
            <person name="Bingen E."/>
            <person name="Bonacorsi S."/>
            <person name="Bouchier C."/>
            <person name="Bouvet O."/>
            <person name="Calteau A."/>
            <person name="Chiapello H."/>
            <person name="Clermont O."/>
            <person name="Cruveiller S."/>
            <person name="Danchin A."/>
            <person name="Diard M."/>
            <person name="Dossat C."/>
            <person name="Karoui M.E."/>
            <person name="Frapy E."/>
            <person name="Garry L."/>
            <person name="Ghigo J.M."/>
            <person name="Gilles A.M."/>
            <person name="Johnson J."/>
            <person name="Le Bouguenec C."/>
            <person name="Lescat M."/>
            <person name="Mangenot S."/>
            <person name="Martinez-Jehanne V."/>
            <person name="Matic I."/>
            <person name="Nassif X."/>
            <person name="Oztas S."/>
            <person name="Petit M.A."/>
            <person name="Pichon C."/>
            <person name="Rouy Z."/>
            <person name="Ruf C.S."/>
            <person name="Schneider D."/>
            <person name="Tourret J."/>
            <person name="Vacherie B."/>
            <person name="Vallenet D."/>
            <person name="Medigue C."/>
            <person name="Rocha E.P.C."/>
            <person name="Denamur E."/>
        </authorList>
    </citation>
    <scope>NUCLEOTIDE SEQUENCE [LARGE SCALE GENOMIC DNA]</scope>
    <source>
        <strain>IAI39 / ExPEC</strain>
    </source>
</reference>
<accession>B7NT99</accession>